<proteinExistence type="inferred from homology"/>
<comment type="similarity">
    <text evidence="1">Belongs to the eukaryotic ribosomal protein eL31 family.</text>
</comment>
<gene>
    <name evidence="1" type="primary">rpl31e</name>
    <name type="ordered locus">OE_4459R</name>
</gene>
<keyword id="KW-0687">Ribonucleoprotein</keyword>
<keyword id="KW-0689">Ribosomal protein</keyword>
<dbReference type="EMBL" id="AM774415">
    <property type="protein sequence ID" value="CAP14847.1"/>
    <property type="molecule type" value="Genomic_DNA"/>
</dbReference>
<dbReference type="RefSeq" id="WP_010903843.1">
    <property type="nucleotide sequence ID" value="NC_010364.1"/>
</dbReference>
<dbReference type="SMR" id="B0R7X8"/>
<dbReference type="EnsemblBacteria" id="CAP14847">
    <property type="protein sequence ID" value="CAP14847"/>
    <property type="gene ID" value="OE_4459R"/>
</dbReference>
<dbReference type="KEGG" id="hsl:OE_4459R"/>
<dbReference type="HOGENOM" id="CLU_112570_3_2_2"/>
<dbReference type="PhylomeDB" id="B0R7X8"/>
<dbReference type="Proteomes" id="UP000001321">
    <property type="component" value="Chromosome"/>
</dbReference>
<dbReference type="GO" id="GO:0022625">
    <property type="term" value="C:cytosolic large ribosomal subunit"/>
    <property type="evidence" value="ECO:0007669"/>
    <property type="project" value="TreeGrafter"/>
</dbReference>
<dbReference type="GO" id="GO:0003735">
    <property type="term" value="F:structural constituent of ribosome"/>
    <property type="evidence" value="ECO:0007669"/>
    <property type="project" value="InterPro"/>
</dbReference>
<dbReference type="GO" id="GO:0002181">
    <property type="term" value="P:cytoplasmic translation"/>
    <property type="evidence" value="ECO:0007669"/>
    <property type="project" value="TreeGrafter"/>
</dbReference>
<dbReference type="CDD" id="cd00463">
    <property type="entry name" value="Ribosomal_L31e"/>
    <property type="match status" value="1"/>
</dbReference>
<dbReference type="Gene3D" id="3.10.440.10">
    <property type="match status" value="1"/>
</dbReference>
<dbReference type="HAMAP" id="MF_00410">
    <property type="entry name" value="Ribosomal_eL31"/>
    <property type="match status" value="1"/>
</dbReference>
<dbReference type="InterPro" id="IPR000054">
    <property type="entry name" value="Ribosomal_eL31"/>
</dbReference>
<dbReference type="InterPro" id="IPR020052">
    <property type="entry name" value="Ribosomal_eL31_CS"/>
</dbReference>
<dbReference type="InterPro" id="IPR023621">
    <property type="entry name" value="Ribosomal_eL31_dom_sf"/>
</dbReference>
<dbReference type="NCBIfam" id="NF002258">
    <property type="entry name" value="PRK01192.1-1"/>
    <property type="match status" value="1"/>
</dbReference>
<dbReference type="PANTHER" id="PTHR10956">
    <property type="entry name" value="60S RIBOSOMAL PROTEIN L31"/>
    <property type="match status" value="1"/>
</dbReference>
<dbReference type="PANTHER" id="PTHR10956:SF0">
    <property type="entry name" value="60S RIBOSOMAL PROTEIN L31"/>
    <property type="match status" value="1"/>
</dbReference>
<dbReference type="Pfam" id="PF01198">
    <property type="entry name" value="Ribosomal_L31e"/>
    <property type="match status" value="1"/>
</dbReference>
<dbReference type="SMART" id="SM01380">
    <property type="entry name" value="Ribosomal_L31e"/>
    <property type="match status" value="1"/>
</dbReference>
<dbReference type="SUPFAM" id="SSF54575">
    <property type="entry name" value="Ribosomal protein L31e"/>
    <property type="match status" value="1"/>
</dbReference>
<dbReference type="PROSITE" id="PS01144">
    <property type="entry name" value="RIBOSOMAL_L31E"/>
    <property type="match status" value="1"/>
</dbReference>
<name>RL31_HALS3</name>
<protein>
    <recommendedName>
        <fullName evidence="1">Large ribosomal subunit protein eL31</fullName>
    </recommendedName>
    <alternativeName>
        <fullName evidence="2">50S ribosomal protein L31e</fullName>
    </alternativeName>
</protein>
<feature type="chain" id="PRO_1000123758" description="Large ribosomal subunit protein eL31">
    <location>
        <begin position="1"/>
        <end position="92"/>
    </location>
</feature>
<reference key="1">
    <citation type="journal article" date="2008" name="Genomics">
        <title>Evolution in the laboratory: the genome of Halobacterium salinarum strain R1 compared to that of strain NRC-1.</title>
        <authorList>
            <person name="Pfeiffer F."/>
            <person name="Schuster S.C."/>
            <person name="Broicher A."/>
            <person name="Falb M."/>
            <person name="Palm P."/>
            <person name="Rodewald K."/>
            <person name="Ruepp A."/>
            <person name="Soppa J."/>
            <person name="Tittor J."/>
            <person name="Oesterhelt D."/>
        </authorList>
    </citation>
    <scope>NUCLEOTIDE SEQUENCE [LARGE SCALE GENOMIC DNA]</scope>
    <source>
        <strain>ATCC 29341 / DSM 671 / R1</strain>
    </source>
</reference>
<evidence type="ECO:0000255" key="1">
    <source>
        <dbReference type="HAMAP-Rule" id="MF_00410"/>
    </source>
</evidence>
<evidence type="ECO:0000305" key="2"/>
<sequence length="92" mass="10223">MSASEFDDRFVTVPLRDVTKVPSHERAGEAMNIIRQHLAKQFAVDEDAVRLDPSINDAVWSEGNNNPPRKLRVHAGSFAEDGETVVEADYEG</sequence>
<organism>
    <name type="scientific">Halobacterium salinarum (strain ATCC 29341 / DSM 671 / R1)</name>
    <dbReference type="NCBI Taxonomy" id="478009"/>
    <lineage>
        <taxon>Archaea</taxon>
        <taxon>Methanobacteriati</taxon>
        <taxon>Methanobacteriota</taxon>
        <taxon>Stenosarchaea group</taxon>
        <taxon>Halobacteria</taxon>
        <taxon>Halobacteriales</taxon>
        <taxon>Halobacteriaceae</taxon>
        <taxon>Halobacterium</taxon>
        <taxon>Halobacterium salinarum NRC-34001</taxon>
    </lineage>
</organism>
<accession>B0R7X8</accession>